<protein>
    <recommendedName>
        <fullName evidence="1">UPF0391 membrane protein YtjA</fullName>
    </recommendedName>
</protein>
<accession>Q5PK28</accession>
<dbReference type="EMBL" id="CP000026">
    <property type="protein sequence ID" value="AAV80099.1"/>
    <property type="status" value="ALT_INIT"/>
    <property type="molecule type" value="Genomic_DNA"/>
</dbReference>
<dbReference type="RefSeq" id="WP_000490276.1">
    <property type="nucleotide sequence ID" value="NC_006511.1"/>
</dbReference>
<dbReference type="KEGG" id="spt:SPA4376"/>
<dbReference type="HOGENOM" id="CLU_187346_2_0_6"/>
<dbReference type="Proteomes" id="UP000008185">
    <property type="component" value="Chromosome"/>
</dbReference>
<dbReference type="GO" id="GO:0005886">
    <property type="term" value="C:plasma membrane"/>
    <property type="evidence" value="ECO:0007669"/>
    <property type="project" value="UniProtKB-SubCell"/>
</dbReference>
<dbReference type="HAMAP" id="MF_01361">
    <property type="entry name" value="UPF0391"/>
    <property type="match status" value="1"/>
</dbReference>
<dbReference type="InterPro" id="IPR009760">
    <property type="entry name" value="DUF1328"/>
</dbReference>
<dbReference type="NCBIfam" id="NF010229">
    <property type="entry name" value="PRK13682.1-4"/>
    <property type="match status" value="1"/>
</dbReference>
<dbReference type="NCBIfam" id="NF010230">
    <property type="entry name" value="PRK13682.1-5"/>
    <property type="match status" value="1"/>
</dbReference>
<dbReference type="Pfam" id="PF07043">
    <property type="entry name" value="DUF1328"/>
    <property type="match status" value="1"/>
</dbReference>
<dbReference type="PIRSF" id="PIRSF036466">
    <property type="entry name" value="UCP036466"/>
    <property type="match status" value="1"/>
</dbReference>
<name>YTJA_SALPA</name>
<proteinExistence type="inferred from homology"/>
<evidence type="ECO:0000255" key="1">
    <source>
        <dbReference type="HAMAP-Rule" id="MF_01361"/>
    </source>
</evidence>
<evidence type="ECO:0000305" key="2"/>
<reference key="1">
    <citation type="journal article" date="2004" name="Nat. Genet.">
        <title>Comparison of genome degradation in Paratyphi A and Typhi, human-restricted serovars of Salmonella enterica that cause typhoid.</title>
        <authorList>
            <person name="McClelland M."/>
            <person name="Sanderson K.E."/>
            <person name="Clifton S.W."/>
            <person name="Latreille P."/>
            <person name="Porwollik S."/>
            <person name="Sabo A."/>
            <person name="Meyer R."/>
            <person name="Bieri T."/>
            <person name="Ozersky P."/>
            <person name="McLellan M."/>
            <person name="Harkins C.R."/>
            <person name="Wang C."/>
            <person name="Nguyen C."/>
            <person name="Berghoff A."/>
            <person name="Elliott G."/>
            <person name="Kohlberg S."/>
            <person name="Strong C."/>
            <person name="Du F."/>
            <person name="Carter J."/>
            <person name="Kremizki C."/>
            <person name="Layman D."/>
            <person name="Leonard S."/>
            <person name="Sun H."/>
            <person name="Fulton L."/>
            <person name="Nash W."/>
            <person name="Miner T."/>
            <person name="Minx P."/>
            <person name="Delehaunty K."/>
            <person name="Fronick C."/>
            <person name="Magrini V."/>
            <person name="Nhan M."/>
            <person name="Warren W."/>
            <person name="Florea L."/>
            <person name="Spieth J."/>
            <person name="Wilson R.K."/>
        </authorList>
    </citation>
    <scope>NUCLEOTIDE SEQUENCE [LARGE SCALE GENOMIC DNA]</scope>
    <source>
        <strain>ATCC 9150 / SARB42</strain>
    </source>
</reference>
<comment type="subcellular location">
    <subcellularLocation>
        <location evidence="1">Cell membrane</location>
        <topology evidence="1">Multi-pass membrane protein</topology>
    </subcellularLocation>
</comment>
<comment type="similarity">
    <text evidence="1">Belongs to the UPF0391 family.</text>
</comment>
<comment type="sequence caution" evidence="2">
    <conflict type="erroneous initiation">
        <sequence resource="EMBL-CDS" id="AAV80099"/>
    </conflict>
</comment>
<sequence>MFRWGIIFLVIALIAAALGFGGLAGTAAGAAKIVFVVGIVLFLVSLFMGRKRP</sequence>
<gene>
    <name evidence="1" type="primary">ytjA</name>
    <name type="ordered locus">SPA4376</name>
</gene>
<feature type="chain" id="PRO_0000256785" description="UPF0391 membrane protein YtjA">
    <location>
        <begin position="1"/>
        <end position="53"/>
    </location>
</feature>
<feature type="transmembrane region" description="Helical" evidence="1">
    <location>
        <begin position="4"/>
        <end position="24"/>
    </location>
</feature>
<feature type="transmembrane region" description="Helical" evidence="1">
    <location>
        <begin position="30"/>
        <end position="48"/>
    </location>
</feature>
<organism>
    <name type="scientific">Salmonella paratyphi A (strain ATCC 9150 / SARB42)</name>
    <dbReference type="NCBI Taxonomy" id="295319"/>
    <lineage>
        <taxon>Bacteria</taxon>
        <taxon>Pseudomonadati</taxon>
        <taxon>Pseudomonadota</taxon>
        <taxon>Gammaproteobacteria</taxon>
        <taxon>Enterobacterales</taxon>
        <taxon>Enterobacteriaceae</taxon>
        <taxon>Salmonella</taxon>
    </lineage>
</organism>
<keyword id="KW-1003">Cell membrane</keyword>
<keyword id="KW-0472">Membrane</keyword>
<keyword id="KW-0812">Transmembrane</keyword>
<keyword id="KW-1133">Transmembrane helix</keyword>